<proteinExistence type="inferred from homology"/>
<accession>Q4A0J8</accession>
<comment type="function">
    <text evidence="1">Facilitates the functional incorporation of the urease nickel metallocenter. This process requires GTP hydrolysis, probably effectuated by UreG.</text>
</comment>
<comment type="subunit">
    <text evidence="1">Homodimer. UreD, UreF and UreG form a complex that acts as a GTP-hydrolysis-dependent molecular chaperone, activating the urease apoprotein by helping to assemble the nickel containing metallocenter of UreC. The UreE protein probably delivers the nickel.</text>
</comment>
<comment type="subcellular location">
    <subcellularLocation>
        <location evidence="1">Cytoplasm</location>
    </subcellularLocation>
</comment>
<comment type="similarity">
    <text evidence="1">Belongs to the SIMIBI class G3E GTPase family. UreG subfamily.</text>
</comment>
<feature type="chain" id="PRO_1000145238" description="Urease accessory protein UreG">
    <location>
        <begin position="1"/>
        <end position="204"/>
    </location>
</feature>
<feature type="binding site" evidence="1">
    <location>
        <begin position="11"/>
        <end position="18"/>
    </location>
    <ligand>
        <name>GTP</name>
        <dbReference type="ChEBI" id="CHEBI:37565"/>
    </ligand>
</feature>
<reference key="1">
    <citation type="journal article" date="2005" name="Proc. Natl. Acad. Sci. U.S.A.">
        <title>Whole genome sequence of Staphylococcus saprophyticus reveals the pathogenesis of uncomplicated urinary tract infection.</title>
        <authorList>
            <person name="Kuroda M."/>
            <person name="Yamashita A."/>
            <person name="Hirakawa H."/>
            <person name="Kumano M."/>
            <person name="Morikawa K."/>
            <person name="Higashide M."/>
            <person name="Maruyama A."/>
            <person name="Inose Y."/>
            <person name="Matoba K."/>
            <person name="Toh H."/>
            <person name="Kuhara S."/>
            <person name="Hattori M."/>
            <person name="Ohta T."/>
        </authorList>
    </citation>
    <scope>NUCLEOTIDE SEQUENCE [LARGE SCALE GENOMIC DNA]</scope>
    <source>
        <strain>ATCC 15305 / DSM 20229 / NCIMB 8711 / NCTC 7292 / S-41</strain>
    </source>
</reference>
<dbReference type="EMBL" id="AP008934">
    <property type="protein sequence ID" value="BAE17405.1"/>
    <property type="molecule type" value="Genomic_DNA"/>
</dbReference>
<dbReference type="RefSeq" id="WP_011302247.1">
    <property type="nucleotide sequence ID" value="NZ_MTGA01000037.1"/>
</dbReference>
<dbReference type="SMR" id="Q4A0J8"/>
<dbReference type="GeneID" id="3616066"/>
<dbReference type="KEGG" id="ssp:SSP0260"/>
<dbReference type="PATRIC" id="fig|342451.11.peg.263"/>
<dbReference type="eggNOG" id="COG0378">
    <property type="taxonomic scope" value="Bacteria"/>
</dbReference>
<dbReference type="HOGENOM" id="CLU_072144_1_0_9"/>
<dbReference type="OrthoDB" id="9802035at2"/>
<dbReference type="Proteomes" id="UP000006371">
    <property type="component" value="Chromosome"/>
</dbReference>
<dbReference type="GO" id="GO:0005737">
    <property type="term" value="C:cytoplasm"/>
    <property type="evidence" value="ECO:0007669"/>
    <property type="project" value="UniProtKB-SubCell"/>
</dbReference>
<dbReference type="GO" id="GO:0005525">
    <property type="term" value="F:GTP binding"/>
    <property type="evidence" value="ECO:0007669"/>
    <property type="project" value="UniProtKB-KW"/>
</dbReference>
<dbReference type="GO" id="GO:0003924">
    <property type="term" value="F:GTPase activity"/>
    <property type="evidence" value="ECO:0007669"/>
    <property type="project" value="InterPro"/>
</dbReference>
<dbReference type="GO" id="GO:0016151">
    <property type="term" value="F:nickel cation binding"/>
    <property type="evidence" value="ECO:0007669"/>
    <property type="project" value="UniProtKB-UniRule"/>
</dbReference>
<dbReference type="GO" id="GO:0043419">
    <property type="term" value="P:urea catabolic process"/>
    <property type="evidence" value="ECO:0007669"/>
    <property type="project" value="InterPro"/>
</dbReference>
<dbReference type="CDD" id="cd05540">
    <property type="entry name" value="UreG"/>
    <property type="match status" value="1"/>
</dbReference>
<dbReference type="Gene3D" id="3.40.50.300">
    <property type="entry name" value="P-loop containing nucleotide triphosphate hydrolases"/>
    <property type="match status" value="1"/>
</dbReference>
<dbReference type="HAMAP" id="MF_01389">
    <property type="entry name" value="UreG"/>
    <property type="match status" value="1"/>
</dbReference>
<dbReference type="InterPro" id="IPR003495">
    <property type="entry name" value="CobW/HypB/UreG_nucleotide-bd"/>
</dbReference>
<dbReference type="InterPro" id="IPR027417">
    <property type="entry name" value="P-loop_NTPase"/>
</dbReference>
<dbReference type="InterPro" id="IPR004400">
    <property type="entry name" value="UreG"/>
</dbReference>
<dbReference type="NCBIfam" id="TIGR00101">
    <property type="entry name" value="ureG"/>
    <property type="match status" value="1"/>
</dbReference>
<dbReference type="PANTHER" id="PTHR31715">
    <property type="entry name" value="UREASE ACCESSORY PROTEIN G"/>
    <property type="match status" value="1"/>
</dbReference>
<dbReference type="PANTHER" id="PTHR31715:SF0">
    <property type="entry name" value="UREASE ACCESSORY PROTEIN G"/>
    <property type="match status" value="1"/>
</dbReference>
<dbReference type="Pfam" id="PF02492">
    <property type="entry name" value="cobW"/>
    <property type="match status" value="1"/>
</dbReference>
<dbReference type="PIRSF" id="PIRSF005624">
    <property type="entry name" value="Ni-bind_GTPase"/>
    <property type="match status" value="1"/>
</dbReference>
<dbReference type="SUPFAM" id="SSF52540">
    <property type="entry name" value="P-loop containing nucleoside triphosphate hydrolases"/>
    <property type="match status" value="1"/>
</dbReference>
<protein>
    <recommendedName>
        <fullName evidence="1">Urease accessory protein UreG</fullName>
    </recommendedName>
</protein>
<name>UREG_STAS1</name>
<sequence>MTDTIKIGVGGPVGAGKTQLIEKIVKRLAKDMSIGVITNDIYTKEDEKILVNSGVLPEDRIIGVETGGCPHTAIREDASMNFAAIDELKERNDDIELIFIESGGDNLAATFSPELVDFSIYIIDVAQGEKIPRKGGQGMIKSDFFVINKTDLAPYVGASLDRMAEDTKVFRGNRPFTFTNLKTDEGLDEVIQWIEQDVFLKGLA</sequence>
<organism>
    <name type="scientific">Staphylococcus saprophyticus subsp. saprophyticus (strain ATCC 15305 / DSM 20229 / NCIMB 8711 / NCTC 7292 / S-41)</name>
    <dbReference type="NCBI Taxonomy" id="342451"/>
    <lineage>
        <taxon>Bacteria</taxon>
        <taxon>Bacillati</taxon>
        <taxon>Bacillota</taxon>
        <taxon>Bacilli</taxon>
        <taxon>Bacillales</taxon>
        <taxon>Staphylococcaceae</taxon>
        <taxon>Staphylococcus</taxon>
    </lineage>
</organism>
<keyword id="KW-0143">Chaperone</keyword>
<keyword id="KW-0963">Cytoplasm</keyword>
<keyword id="KW-0342">GTP-binding</keyword>
<keyword id="KW-0996">Nickel insertion</keyword>
<keyword id="KW-0547">Nucleotide-binding</keyword>
<keyword id="KW-1185">Reference proteome</keyword>
<gene>
    <name evidence="1" type="primary">ureG</name>
    <name type="ordered locus">SSP0260</name>
</gene>
<evidence type="ECO:0000255" key="1">
    <source>
        <dbReference type="HAMAP-Rule" id="MF_01389"/>
    </source>
</evidence>